<name>RLMH_BORPE</name>
<protein>
    <recommendedName>
        <fullName evidence="1">Ribosomal RNA large subunit methyltransferase H</fullName>
        <ecNumber evidence="1">2.1.1.177</ecNumber>
    </recommendedName>
    <alternativeName>
        <fullName evidence="1">23S rRNA (pseudouridine1915-N3)-methyltransferase</fullName>
    </alternativeName>
    <alternativeName>
        <fullName evidence="1">23S rRNA m3Psi1915 methyltransferase</fullName>
    </alternativeName>
    <alternativeName>
        <fullName evidence="1">rRNA (pseudouridine-N3-)-methyltransferase RlmH</fullName>
    </alternativeName>
</protein>
<gene>
    <name evidence="1" type="primary">rlmH</name>
    <name type="ordered locus">BP2313</name>
</gene>
<keyword id="KW-0963">Cytoplasm</keyword>
<keyword id="KW-0489">Methyltransferase</keyword>
<keyword id="KW-1185">Reference proteome</keyword>
<keyword id="KW-0698">rRNA processing</keyword>
<keyword id="KW-0949">S-adenosyl-L-methionine</keyword>
<keyword id="KW-0808">Transferase</keyword>
<dbReference type="EC" id="2.1.1.177" evidence="1"/>
<dbReference type="EMBL" id="BX640418">
    <property type="protein sequence ID" value="CAE42586.1"/>
    <property type="molecule type" value="Genomic_DNA"/>
</dbReference>
<dbReference type="RefSeq" id="NP_880951.1">
    <property type="nucleotide sequence ID" value="NC_002929.2"/>
</dbReference>
<dbReference type="RefSeq" id="WP_003813199.1">
    <property type="nucleotide sequence ID" value="NZ_CP039022.1"/>
</dbReference>
<dbReference type="SMR" id="Q7VWE4"/>
<dbReference type="STRING" id="257313.BP2313"/>
<dbReference type="PaxDb" id="257313-BP2313"/>
<dbReference type="GeneID" id="69602210"/>
<dbReference type="KEGG" id="bpe:BP2313"/>
<dbReference type="PATRIC" id="fig|257313.5.peg.2493"/>
<dbReference type="eggNOG" id="COG1576">
    <property type="taxonomic scope" value="Bacteria"/>
</dbReference>
<dbReference type="HOGENOM" id="CLU_100552_1_0_4"/>
<dbReference type="Proteomes" id="UP000002676">
    <property type="component" value="Chromosome"/>
</dbReference>
<dbReference type="GO" id="GO:0005737">
    <property type="term" value="C:cytoplasm"/>
    <property type="evidence" value="ECO:0007669"/>
    <property type="project" value="UniProtKB-SubCell"/>
</dbReference>
<dbReference type="GO" id="GO:0070038">
    <property type="term" value="F:rRNA (pseudouridine-N3-)-methyltransferase activity"/>
    <property type="evidence" value="ECO:0007669"/>
    <property type="project" value="UniProtKB-UniRule"/>
</dbReference>
<dbReference type="CDD" id="cd18081">
    <property type="entry name" value="RlmH-like"/>
    <property type="match status" value="1"/>
</dbReference>
<dbReference type="Gene3D" id="3.40.1280.10">
    <property type="match status" value="1"/>
</dbReference>
<dbReference type="HAMAP" id="MF_00658">
    <property type="entry name" value="23SrRNA_methyltr_H"/>
    <property type="match status" value="1"/>
</dbReference>
<dbReference type="InterPro" id="IPR029028">
    <property type="entry name" value="Alpha/beta_knot_MTases"/>
</dbReference>
<dbReference type="InterPro" id="IPR003742">
    <property type="entry name" value="RlmH-like"/>
</dbReference>
<dbReference type="InterPro" id="IPR029026">
    <property type="entry name" value="tRNA_m1G_MTases_N"/>
</dbReference>
<dbReference type="NCBIfam" id="NF000986">
    <property type="entry name" value="PRK00103.1-4"/>
    <property type="match status" value="1"/>
</dbReference>
<dbReference type="PANTHER" id="PTHR33603">
    <property type="entry name" value="METHYLTRANSFERASE"/>
    <property type="match status" value="1"/>
</dbReference>
<dbReference type="PANTHER" id="PTHR33603:SF1">
    <property type="entry name" value="RIBOSOMAL RNA LARGE SUBUNIT METHYLTRANSFERASE H"/>
    <property type="match status" value="1"/>
</dbReference>
<dbReference type="Pfam" id="PF02590">
    <property type="entry name" value="SPOUT_MTase"/>
    <property type="match status" value="1"/>
</dbReference>
<dbReference type="PIRSF" id="PIRSF004505">
    <property type="entry name" value="MT_bac"/>
    <property type="match status" value="1"/>
</dbReference>
<dbReference type="SUPFAM" id="SSF75217">
    <property type="entry name" value="alpha/beta knot"/>
    <property type="match status" value="1"/>
</dbReference>
<evidence type="ECO:0000255" key="1">
    <source>
        <dbReference type="HAMAP-Rule" id="MF_00658"/>
    </source>
</evidence>
<sequence length="156" mass="17194">MKLIVAAVGTRMPGWVETAWDDYAKRLPADCALELREIKPEPRTSGKTPAQMMAAEARRIETALPPGVLRIALDERGRDLTTVALSQQLEKWRAGGRDVAFLVGGPDGLDAALKASCEGLLRLSSLTLPHPMVRVLLAEQLYRAWAIMTNHPYHRA</sequence>
<feature type="chain" id="PRO_0000198097" description="Ribosomal RNA large subunit methyltransferase H">
    <location>
        <begin position="1"/>
        <end position="156"/>
    </location>
</feature>
<feature type="binding site" evidence="1">
    <location>
        <position position="73"/>
    </location>
    <ligand>
        <name>S-adenosyl-L-methionine</name>
        <dbReference type="ChEBI" id="CHEBI:59789"/>
    </ligand>
</feature>
<feature type="binding site" evidence="1">
    <location>
        <position position="104"/>
    </location>
    <ligand>
        <name>S-adenosyl-L-methionine</name>
        <dbReference type="ChEBI" id="CHEBI:59789"/>
    </ligand>
</feature>
<feature type="binding site" evidence="1">
    <location>
        <begin position="123"/>
        <end position="128"/>
    </location>
    <ligand>
        <name>S-adenosyl-L-methionine</name>
        <dbReference type="ChEBI" id="CHEBI:59789"/>
    </ligand>
</feature>
<organism>
    <name type="scientific">Bordetella pertussis (strain Tohama I / ATCC BAA-589 / NCTC 13251)</name>
    <dbReference type="NCBI Taxonomy" id="257313"/>
    <lineage>
        <taxon>Bacteria</taxon>
        <taxon>Pseudomonadati</taxon>
        <taxon>Pseudomonadota</taxon>
        <taxon>Betaproteobacteria</taxon>
        <taxon>Burkholderiales</taxon>
        <taxon>Alcaligenaceae</taxon>
        <taxon>Bordetella</taxon>
    </lineage>
</organism>
<proteinExistence type="inferred from homology"/>
<reference key="1">
    <citation type="journal article" date="2003" name="Nat. Genet.">
        <title>Comparative analysis of the genome sequences of Bordetella pertussis, Bordetella parapertussis and Bordetella bronchiseptica.</title>
        <authorList>
            <person name="Parkhill J."/>
            <person name="Sebaihia M."/>
            <person name="Preston A."/>
            <person name="Murphy L.D."/>
            <person name="Thomson N.R."/>
            <person name="Harris D.E."/>
            <person name="Holden M.T.G."/>
            <person name="Churcher C.M."/>
            <person name="Bentley S.D."/>
            <person name="Mungall K.L."/>
            <person name="Cerdeno-Tarraga A.-M."/>
            <person name="Temple L."/>
            <person name="James K.D."/>
            <person name="Harris B."/>
            <person name="Quail M.A."/>
            <person name="Achtman M."/>
            <person name="Atkin R."/>
            <person name="Baker S."/>
            <person name="Basham D."/>
            <person name="Bason N."/>
            <person name="Cherevach I."/>
            <person name="Chillingworth T."/>
            <person name="Collins M."/>
            <person name="Cronin A."/>
            <person name="Davis P."/>
            <person name="Doggett J."/>
            <person name="Feltwell T."/>
            <person name="Goble A."/>
            <person name="Hamlin N."/>
            <person name="Hauser H."/>
            <person name="Holroyd S."/>
            <person name="Jagels K."/>
            <person name="Leather S."/>
            <person name="Moule S."/>
            <person name="Norberczak H."/>
            <person name="O'Neil S."/>
            <person name="Ormond D."/>
            <person name="Price C."/>
            <person name="Rabbinowitsch E."/>
            <person name="Rutter S."/>
            <person name="Sanders M."/>
            <person name="Saunders D."/>
            <person name="Seeger K."/>
            <person name="Sharp S."/>
            <person name="Simmonds M."/>
            <person name="Skelton J."/>
            <person name="Squares R."/>
            <person name="Squares S."/>
            <person name="Stevens K."/>
            <person name="Unwin L."/>
            <person name="Whitehead S."/>
            <person name="Barrell B.G."/>
            <person name="Maskell D.J."/>
        </authorList>
    </citation>
    <scope>NUCLEOTIDE SEQUENCE [LARGE SCALE GENOMIC DNA]</scope>
    <source>
        <strain>Tohama I / ATCC BAA-589 / NCTC 13251</strain>
    </source>
</reference>
<comment type="function">
    <text evidence="1">Specifically methylates the pseudouridine at position 1915 (m3Psi1915) in 23S rRNA.</text>
</comment>
<comment type="catalytic activity">
    <reaction evidence="1">
        <text>pseudouridine(1915) in 23S rRNA + S-adenosyl-L-methionine = N(3)-methylpseudouridine(1915) in 23S rRNA + S-adenosyl-L-homocysteine + H(+)</text>
        <dbReference type="Rhea" id="RHEA:42752"/>
        <dbReference type="Rhea" id="RHEA-COMP:10221"/>
        <dbReference type="Rhea" id="RHEA-COMP:10222"/>
        <dbReference type="ChEBI" id="CHEBI:15378"/>
        <dbReference type="ChEBI" id="CHEBI:57856"/>
        <dbReference type="ChEBI" id="CHEBI:59789"/>
        <dbReference type="ChEBI" id="CHEBI:65314"/>
        <dbReference type="ChEBI" id="CHEBI:74486"/>
        <dbReference type="EC" id="2.1.1.177"/>
    </reaction>
</comment>
<comment type="subunit">
    <text evidence="1">Homodimer.</text>
</comment>
<comment type="subcellular location">
    <subcellularLocation>
        <location evidence="1">Cytoplasm</location>
    </subcellularLocation>
</comment>
<comment type="similarity">
    <text evidence="1">Belongs to the RNA methyltransferase RlmH family.</text>
</comment>
<accession>Q7VWE4</accession>